<sequence>MEETTPPLQAGSKPHLEKLTLGVTRILESSPGVTEVSIIEKLPAERHVISSWEQKNNCVMPEDVRNFYLMTNGFHMTWSVKLDEHIIPLGSMVINGISKLTQLIQSSVYSLPNAPTLADLEDDTQEGNEDHQLEKPHFDCRSAIFELDSCNGNGKVCLVYKNGKPGLAHDTEIWFLDRALYWHFLTDTFIAYYRLLITHLGLPQWQYAFTSYGISPQAKQWFSMYKPITYNTSLLTEESDNFANKLDPSKVFKSKNKILIPKKKGPVPPASGQKGPGPLPPPTSKPTTGSGNPVRK</sequence>
<dbReference type="EMBL" id="BC060253">
    <property type="protein sequence ID" value="AAH60253.1"/>
    <property type="molecule type" value="mRNA"/>
</dbReference>
<dbReference type="EMBL" id="BC080777">
    <property type="protein sequence ID" value="AAH80777.1"/>
    <property type="status" value="ALT_INIT"/>
    <property type="molecule type" value="mRNA"/>
</dbReference>
<dbReference type="CCDS" id="CCDS29105.2"/>
<dbReference type="RefSeq" id="NP_001004361.2">
    <property type="nucleotide sequence ID" value="NM_001004361.2"/>
</dbReference>
<dbReference type="RefSeq" id="NP_001136170.1">
    <property type="nucleotide sequence ID" value="NM_001142698.1"/>
</dbReference>
<dbReference type="CORUM" id="Q66JT5"/>
<dbReference type="FunCoup" id="Q66JT5">
    <property type="interactions" value="379"/>
</dbReference>
<dbReference type="STRING" id="10090.ENSMUSP00000111484"/>
<dbReference type="PhosphoSitePlus" id="Q66JT5"/>
<dbReference type="PaxDb" id="10090-ENSMUSP00000111484"/>
<dbReference type="ProteomicsDB" id="259502"/>
<dbReference type="Pumba" id="Q66JT5"/>
<dbReference type="GeneID" id="66648"/>
<dbReference type="KEGG" id="mmu:66648"/>
<dbReference type="AGR" id="MGI:1913898"/>
<dbReference type="CTD" id="25941"/>
<dbReference type="MGI" id="MGI:1913898">
    <property type="gene designation" value="Tpgs2"/>
</dbReference>
<dbReference type="eggNOG" id="ENOG502R21Z">
    <property type="taxonomic scope" value="Eukaryota"/>
</dbReference>
<dbReference type="InParanoid" id="Q66JT5"/>
<dbReference type="OrthoDB" id="10249691at2759"/>
<dbReference type="PhylomeDB" id="Q66JT5"/>
<dbReference type="BioGRID-ORCS" id="66648">
    <property type="hits" value="1 hit in 78 CRISPR screens"/>
</dbReference>
<dbReference type="ChiTaRS" id="Tpgs2">
    <property type="organism name" value="mouse"/>
</dbReference>
<dbReference type="PRO" id="PR:Q66JT5"/>
<dbReference type="Proteomes" id="UP000000589">
    <property type="component" value="Unplaced"/>
</dbReference>
<dbReference type="RNAct" id="Q66JT5">
    <property type="molecule type" value="protein"/>
</dbReference>
<dbReference type="GO" id="GO:0034451">
    <property type="term" value="C:centriolar satellite"/>
    <property type="evidence" value="ECO:0007669"/>
    <property type="project" value="UniProtKB-SubCell"/>
</dbReference>
<dbReference type="GO" id="GO:0005829">
    <property type="term" value="C:cytosol"/>
    <property type="evidence" value="ECO:0000304"/>
    <property type="project" value="Reactome"/>
</dbReference>
<dbReference type="GO" id="GO:0005874">
    <property type="term" value="C:microtubule"/>
    <property type="evidence" value="ECO:0007669"/>
    <property type="project" value="UniProtKB-KW"/>
</dbReference>
<dbReference type="InterPro" id="IPR018958">
    <property type="entry name" value="Knr4/Smi1-like_dom"/>
</dbReference>
<dbReference type="InterPro" id="IPR037883">
    <property type="entry name" value="Knr4/Smi1-like_sf"/>
</dbReference>
<dbReference type="InterPro" id="IPR039231">
    <property type="entry name" value="TPGS2"/>
</dbReference>
<dbReference type="PANTHER" id="PTHR31854">
    <property type="entry name" value="TUBULIN POLYGLUTAMYLASE COMPLEX SUBUNIT 2"/>
    <property type="match status" value="1"/>
</dbReference>
<dbReference type="PANTHER" id="PTHR31854:SF2">
    <property type="entry name" value="TUBULIN POLYGLUTAMYLASE COMPLEX SUBUNIT 2"/>
    <property type="match status" value="1"/>
</dbReference>
<dbReference type="SMART" id="SM00860">
    <property type="entry name" value="SMI1_KNR4"/>
    <property type="match status" value="1"/>
</dbReference>
<dbReference type="SUPFAM" id="SSF160631">
    <property type="entry name" value="SMI1/KNR4-like"/>
    <property type="match status" value="1"/>
</dbReference>
<accession>Q66JT5</accession>
<accession>Q6PAK1</accession>
<reference key="1">
    <citation type="journal article" date="2004" name="Genome Res.">
        <title>The status, quality, and expansion of the NIH full-length cDNA project: the Mammalian Gene Collection (MGC).</title>
        <authorList>
            <consortium name="The MGC Project Team"/>
        </authorList>
    </citation>
    <scope>NUCLEOTIDE SEQUENCE [LARGE SCALE MRNA]</scope>
    <source>
        <strain>C57BL/6J</strain>
        <tissue>Brain</tissue>
        <tissue>Embryo</tissue>
    </source>
</reference>
<reference key="2">
    <citation type="journal article" date="2005" name="Science">
        <title>Tubulin polyglutamylase enzymes are members of the TTL domain protein family.</title>
        <authorList>
            <person name="Janke C."/>
            <person name="Rogowski K."/>
            <person name="Wloga D."/>
            <person name="Regnard C."/>
            <person name="Kajava A.V."/>
            <person name="Strub J.-M."/>
            <person name="Temurak N."/>
            <person name="van Dijk J."/>
            <person name="Boucher D."/>
            <person name="van Dorsselaer A."/>
            <person name="Suryavanshi S."/>
            <person name="Gaertig J."/>
            <person name="Edde B."/>
        </authorList>
    </citation>
    <scope>IDENTIFICATION BY MASS SPECTROMETRY AS PART OF THE TUBULIN POLYGLUTAMYLASE COMPLEX</scope>
</reference>
<name>TPGS2_MOUSE</name>
<feature type="chain" id="PRO_0000079305" description="Tubulin polyglutamylase complex subunit 2">
    <location>
        <begin position="1"/>
        <end position="296"/>
    </location>
</feature>
<feature type="region of interest" description="Disordered" evidence="2">
    <location>
        <begin position="254"/>
        <end position="296"/>
    </location>
</feature>
<feature type="compositionally biased region" description="Basic residues" evidence="2">
    <location>
        <begin position="254"/>
        <end position="265"/>
    </location>
</feature>
<feature type="compositionally biased region" description="Low complexity" evidence="2">
    <location>
        <begin position="285"/>
        <end position="296"/>
    </location>
</feature>
<feature type="sequence conflict" description="In Ref. 1; AAH60253." evidence="4" ref="1">
    <original>I</original>
    <variation>T</variation>
    <location>
        <position position="190"/>
    </location>
</feature>
<feature type="sequence conflict" description="In Ref. 1; AAH60253." evidence="4" ref="1">
    <original>A</original>
    <variation>V</variation>
    <location>
        <position position="243"/>
    </location>
</feature>
<comment type="function">
    <text evidence="1">Subunit of the tubulin polyglutamylase complex (TPGC). The complex mediates cilia and flagella polyglutamylation which is essential for their biogenesis and motility.</text>
</comment>
<comment type="subunit">
    <text evidence="1 3">Part of the neuronal tubulin polyglutamylase complex which contains TPGS1, TPGS2, TTLL1, LRRC49 and NICN1 (PubMed:15890843). Interacts with CSTPP1 and LRRC49 (By similarity).</text>
</comment>
<comment type="subcellular location">
    <subcellularLocation>
        <location evidence="1">Cytoplasm</location>
        <location evidence="1">Cytoskeleton</location>
    </subcellularLocation>
    <subcellularLocation>
        <location evidence="1">Cytoplasm</location>
        <location evidence="1">Cytoskeleton</location>
        <location evidence="1">Microtubule organizing center</location>
        <location evidence="1">Centrosome</location>
        <location evidence="1">Centriolar satellite</location>
    </subcellularLocation>
    <text evidence="1">Associated with microtubules.</text>
</comment>
<comment type="sequence caution" evidence="4">
    <conflict type="erroneous initiation">
        <sequence resource="EMBL-CDS" id="AAH80777"/>
    </conflict>
    <text>Truncated N-terminus.</text>
</comment>
<proteinExistence type="evidence at protein level"/>
<gene>
    <name type="primary">Tpgs2</name>
</gene>
<keyword id="KW-0963">Cytoplasm</keyword>
<keyword id="KW-0206">Cytoskeleton</keyword>
<keyword id="KW-0493">Microtubule</keyword>
<keyword id="KW-1185">Reference proteome</keyword>
<protein>
    <recommendedName>
        <fullName>Tubulin polyglutamylase complex subunit 2</fullName>
        <shortName>PGs2</shortName>
    </recommendedName>
</protein>
<organism>
    <name type="scientific">Mus musculus</name>
    <name type="common">Mouse</name>
    <dbReference type="NCBI Taxonomy" id="10090"/>
    <lineage>
        <taxon>Eukaryota</taxon>
        <taxon>Metazoa</taxon>
        <taxon>Chordata</taxon>
        <taxon>Craniata</taxon>
        <taxon>Vertebrata</taxon>
        <taxon>Euteleostomi</taxon>
        <taxon>Mammalia</taxon>
        <taxon>Eutheria</taxon>
        <taxon>Euarchontoglires</taxon>
        <taxon>Glires</taxon>
        <taxon>Rodentia</taxon>
        <taxon>Myomorpha</taxon>
        <taxon>Muroidea</taxon>
        <taxon>Muridae</taxon>
        <taxon>Murinae</taxon>
        <taxon>Mus</taxon>
        <taxon>Mus</taxon>
    </lineage>
</organism>
<evidence type="ECO:0000250" key="1">
    <source>
        <dbReference type="UniProtKB" id="Q68CL5"/>
    </source>
</evidence>
<evidence type="ECO:0000256" key="2">
    <source>
        <dbReference type="SAM" id="MobiDB-lite"/>
    </source>
</evidence>
<evidence type="ECO:0000269" key="3">
    <source>
    </source>
</evidence>
<evidence type="ECO:0000305" key="4"/>